<accession>Q2YU25</accession>
<reference key="1">
    <citation type="journal article" date="2007" name="PLoS ONE">
        <title>Molecular correlates of host specialization in Staphylococcus aureus.</title>
        <authorList>
            <person name="Herron-Olson L."/>
            <person name="Fitzgerald J.R."/>
            <person name="Musser J.M."/>
            <person name="Kapur V."/>
        </authorList>
    </citation>
    <scope>NUCLEOTIDE SEQUENCE [LARGE SCALE GENOMIC DNA]</scope>
    <source>
        <strain>bovine RF122 / ET3-1</strain>
    </source>
</reference>
<dbReference type="EMBL" id="AJ938182">
    <property type="protein sequence ID" value="CAI81483.1"/>
    <property type="molecule type" value="Genomic_DNA"/>
</dbReference>
<dbReference type="RefSeq" id="WP_000110011.1">
    <property type="nucleotide sequence ID" value="NC_007622.1"/>
</dbReference>
<dbReference type="SMR" id="Q2YU25"/>
<dbReference type="GeneID" id="98346243"/>
<dbReference type="KEGG" id="sab:SAB1794c"/>
<dbReference type="HOGENOM" id="CLU_096072_4_2_9"/>
<dbReference type="GO" id="GO:0005737">
    <property type="term" value="C:cytoplasm"/>
    <property type="evidence" value="ECO:0007669"/>
    <property type="project" value="UniProtKB-SubCell"/>
</dbReference>
<dbReference type="GO" id="GO:0003700">
    <property type="term" value="F:DNA-binding transcription factor activity"/>
    <property type="evidence" value="ECO:0007669"/>
    <property type="project" value="InterPro"/>
</dbReference>
<dbReference type="GO" id="GO:0000976">
    <property type="term" value="F:transcription cis-regulatory region binding"/>
    <property type="evidence" value="ECO:0007669"/>
    <property type="project" value="TreeGrafter"/>
</dbReference>
<dbReference type="GO" id="GO:0008270">
    <property type="term" value="F:zinc ion binding"/>
    <property type="evidence" value="ECO:0007669"/>
    <property type="project" value="TreeGrafter"/>
</dbReference>
<dbReference type="GO" id="GO:0045892">
    <property type="term" value="P:negative regulation of DNA-templated transcription"/>
    <property type="evidence" value="ECO:0007669"/>
    <property type="project" value="TreeGrafter"/>
</dbReference>
<dbReference type="GO" id="GO:1900376">
    <property type="term" value="P:regulation of secondary metabolite biosynthetic process"/>
    <property type="evidence" value="ECO:0007669"/>
    <property type="project" value="TreeGrafter"/>
</dbReference>
<dbReference type="CDD" id="cd07153">
    <property type="entry name" value="Fur_like"/>
    <property type="match status" value="1"/>
</dbReference>
<dbReference type="FunFam" id="1.10.10.10:FF:000147">
    <property type="entry name" value="Fur family transcriptional regulator"/>
    <property type="match status" value="1"/>
</dbReference>
<dbReference type="FunFam" id="3.30.1490.190:FF:000003">
    <property type="entry name" value="Fur family transcriptional regulator"/>
    <property type="match status" value="1"/>
</dbReference>
<dbReference type="Gene3D" id="3.30.1490.190">
    <property type="match status" value="1"/>
</dbReference>
<dbReference type="Gene3D" id="1.10.10.10">
    <property type="entry name" value="Winged helix-like DNA-binding domain superfamily/Winged helix DNA-binding domain"/>
    <property type="match status" value="1"/>
</dbReference>
<dbReference type="InterPro" id="IPR002481">
    <property type="entry name" value="FUR"/>
</dbReference>
<dbReference type="InterPro" id="IPR043135">
    <property type="entry name" value="Fur_C"/>
</dbReference>
<dbReference type="InterPro" id="IPR036388">
    <property type="entry name" value="WH-like_DNA-bd_sf"/>
</dbReference>
<dbReference type="InterPro" id="IPR036390">
    <property type="entry name" value="WH_DNA-bd_sf"/>
</dbReference>
<dbReference type="PANTHER" id="PTHR33202:SF8">
    <property type="entry name" value="PEROXIDE-RESPONSIVE REPRESSOR PERR"/>
    <property type="match status" value="1"/>
</dbReference>
<dbReference type="PANTHER" id="PTHR33202">
    <property type="entry name" value="ZINC UPTAKE REGULATION PROTEIN"/>
    <property type="match status" value="1"/>
</dbReference>
<dbReference type="Pfam" id="PF01475">
    <property type="entry name" value="FUR"/>
    <property type="match status" value="1"/>
</dbReference>
<dbReference type="SUPFAM" id="SSF46785">
    <property type="entry name" value="Winged helix' DNA-binding domain"/>
    <property type="match status" value="1"/>
</dbReference>
<gene>
    <name type="primary">perR</name>
    <name type="ordered locus">SAB1794c</name>
</gene>
<comment type="function">
    <text evidence="1">Manganese-dependent repressor that controls a regulon of oxidative stress resistance and iron-storage proteins. May act as a hydrogen peroxide and organic hydroperoxide sensor (By similarity).</text>
</comment>
<comment type="subcellular location">
    <subcellularLocation>
        <location evidence="1">Cytoplasm</location>
    </subcellularLocation>
</comment>
<comment type="similarity">
    <text evidence="2">Belongs to the Fur family.</text>
</comment>
<sequence>MSVEIESIEHELEESIASLRQAGVRITPQRQAILRYLISSHTHPTADEIYQALSPDFPNISVATIYNNLRVFKDIGIVKELTYGDSSSRFDFNTHNHYHIICEQCGKIVDFQYPQLNEIERLAQHMTDFDVTHHRMEIYGVCKECQDK</sequence>
<organism>
    <name type="scientific">Staphylococcus aureus (strain bovine RF122 / ET3-1)</name>
    <dbReference type="NCBI Taxonomy" id="273036"/>
    <lineage>
        <taxon>Bacteria</taxon>
        <taxon>Bacillati</taxon>
        <taxon>Bacillota</taxon>
        <taxon>Bacilli</taxon>
        <taxon>Bacillales</taxon>
        <taxon>Staphylococcaceae</taxon>
        <taxon>Staphylococcus</taxon>
    </lineage>
</organism>
<name>PERR_STAAB</name>
<proteinExistence type="inferred from homology"/>
<feature type="chain" id="PRO_0000289010" description="Peroxide-responsive repressor PerR">
    <location>
        <begin position="1"/>
        <end position="148"/>
    </location>
</feature>
<feature type="region of interest" description="DNA-binding" evidence="1">
    <location>
        <begin position="1"/>
        <end position="84"/>
    </location>
</feature>
<feature type="binding site" evidence="1">
    <location>
        <position position="102"/>
    </location>
    <ligand>
        <name>Zn(2+)</name>
        <dbReference type="ChEBI" id="CHEBI:29105"/>
    </ligand>
</feature>
<feature type="binding site" evidence="1">
    <location>
        <position position="105"/>
    </location>
    <ligand>
        <name>Zn(2+)</name>
        <dbReference type="ChEBI" id="CHEBI:29105"/>
    </ligand>
</feature>
<feature type="binding site" evidence="1">
    <location>
        <position position="142"/>
    </location>
    <ligand>
        <name>Zn(2+)</name>
        <dbReference type="ChEBI" id="CHEBI:29105"/>
    </ligand>
</feature>
<feature type="binding site" evidence="1">
    <location>
        <position position="145"/>
    </location>
    <ligand>
        <name>Zn(2+)</name>
        <dbReference type="ChEBI" id="CHEBI:29105"/>
    </ligand>
</feature>
<protein>
    <recommendedName>
        <fullName>Peroxide-responsive repressor PerR</fullName>
    </recommendedName>
</protein>
<keyword id="KW-0963">Cytoplasm</keyword>
<keyword id="KW-0238">DNA-binding</keyword>
<keyword id="KW-0464">Manganese</keyword>
<keyword id="KW-0479">Metal-binding</keyword>
<keyword id="KW-0678">Repressor</keyword>
<keyword id="KW-0804">Transcription</keyword>
<keyword id="KW-0805">Transcription regulation</keyword>
<keyword id="KW-0862">Zinc</keyword>
<evidence type="ECO:0000250" key="1"/>
<evidence type="ECO:0000305" key="2"/>